<proteinExistence type="predicted"/>
<keyword id="KW-1185">Reference proteome</keyword>
<protein>
    <recommendedName>
        <fullName>Uncharacterized protein YKR073C</fullName>
    </recommendedName>
</protein>
<organism>
    <name type="scientific">Saccharomyces cerevisiae (strain ATCC 204508 / S288c)</name>
    <name type="common">Baker's yeast</name>
    <dbReference type="NCBI Taxonomy" id="559292"/>
    <lineage>
        <taxon>Eukaryota</taxon>
        <taxon>Fungi</taxon>
        <taxon>Dikarya</taxon>
        <taxon>Ascomycota</taxon>
        <taxon>Saccharomycotina</taxon>
        <taxon>Saccharomycetes</taxon>
        <taxon>Saccharomycetales</taxon>
        <taxon>Saccharomycetaceae</taxon>
        <taxon>Saccharomyces</taxon>
    </lineage>
</organism>
<feature type="chain" id="PRO_0000203220" description="Uncharacterized protein YKR073C">
    <location>
        <begin position="1"/>
        <end position="106"/>
    </location>
</feature>
<dbReference type="EMBL" id="U01878">
    <property type="status" value="NOT_ANNOTATED_CDS"/>
    <property type="molecule type" value="Genomic_DNA"/>
</dbReference>
<dbReference type="EMBL" id="Z28298">
    <property type="protein sequence ID" value="CAA82152.1"/>
    <property type="molecule type" value="Genomic_DNA"/>
</dbReference>
<dbReference type="EMBL" id="AY558317">
    <property type="protein sequence ID" value="AAS56643.1"/>
    <property type="molecule type" value="Genomic_DNA"/>
</dbReference>
<dbReference type="EMBL" id="BK006944">
    <property type="protein sequence ID" value="DAA80312.1"/>
    <property type="molecule type" value="Genomic_DNA"/>
</dbReference>
<dbReference type="PIR" id="S38150">
    <property type="entry name" value="S38150"/>
</dbReference>
<dbReference type="RefSeq" id="NP_001335792.1">
    <property type="nucleotide sequence ID" value="NM_001348852.1"/>
</dbReference>
<dbReference type="DIP" id="DIP-5384N"/>
<dbReference type="FunCoup" id="P36153">
    <property type="interactions" value="23"/>
</dbReference>
<dbReference type="IntAct" id="P36153">
    <property type="interactions" value="1"/>
</dbReference>
<dbReference type="STRING" id="4932.YKR073C"/>
<dbReference type="iPTMnet" id="P36153"/>
<dbReference type="PaxDb" id="4932-YKR073C"/>
<dbReference type="EnsemblFungi" id="YKR073C_mRNA">
    <property type="protein sequence ID" value="YKR073C"/>
    <property type="gene ID" value="YKR073C"/>
</dbReference>
<dbReference type="GeneID" id="853947"/>
<dbReference type="AGR" id="SGD:S000001781"/>
<dbReference type="SGD" id="S000001781">
    <property type="gene designation" value="YKR073C"/>
</dbReference>
<dbReference type="HOGENOM" id="CLU_2225268_0_0_1"/>
<dbReference type="InParanoid" id="P36153"/>
<dbReference type="OrthoDB" id="10293472at2759"/>
<dbReference type="PRO" id="PR:P36153"/>
<dbReference type="Proteomes" id="UP000002311">
    <property type="component" value="Chromosome XI"/>
</dbReference>
<dbReference type="RNAct" id="P36153">
    <property type="molecule type" value="protein"/>
</dbReference>
<name>YK53_YEAST</name>
<reference key="1">
    <citation type="submission" date="1993-09" db="EMBL/GenBank/DDBJ databases">
        <authorList>
            <person name="di Como C.J."/>
            <person name="Arndt K.T."/>
        </authorList>
    </citation>
    <scope>NUCLEOTIDE SEQUENCE [GENOMIC DNA]</scope>
</reference>
<reference key="2">
    <citation type="journal article" date="1994" name="Nature">
        <title>Complete DNA sequence of yeast chromosome XI.</title>
        <authorList>
            <person name="Dujon B."/>
            <person name="Alexandraki D."/>
            <person name="Andre B."/>
            <person name="Ansorge W."/>
            <person name="Baladron V."/>
            <person name="Ballesta J.P.G."/>
            <person name="Banrevi A."/>
            <person name="Bolle P.-A."/>
            <person name="Bolotin-Fukuhara M."/>
            <person name="Bossier P."/>
            <person name="Bou G."/>
            <person name="Boyer J."/>
            <person name="Buitrago M.J."/>
            <person name="Cheret G."/>
            <person name="Colleaux L."/>
            <person name="Daignan-Fornier B."/>
            <person name="del Rey F."/>
            <person name="Dion C."/>
            <person name="Domdey H."/>
            <person name="Duesterhoeft A."/>
            <person name="Duesterhus S."/>
            <person name="Entian K.-D."/>
            <person name="Erfle H."/>
            <person name="Esteban P.F."/>
            <person name="Feldmann H."/>
            <person name="Fernandes L."/>
            <person name="Fobo G.M."/>
            <person name="Fritz C."/>
            <person name="Fukuhara H."/>
            <person name="Gabel C."/>
            <person name="Gaillon L."/>
            <person name="Garcia-Cantalejo J.M."/>
            <person name="Garcia-Ramirez J.J."/>
            <person name="Gent M.E."/>
            <person name="Ghazvini M."/>
            <person name="Goffeau A."/>
            <person name="Gonzalez A."/>
            <person name="Grothues D."/>
            <person name="Guerreiro P."/>
            <person name="Hegemann J.H."/>
            <person name="Hewitt N."/>
            <person name="Hilger F."/>
            <person name="Hollenberg C.P."/>
            <person name="Horaitis O."/>
            <person name="Indge K.J."/>
            <person name="Jacquier A."/>
            <person name="James C.M."/>
            <person name="Jauniaux J.-C."/>
            <person name="Jimenez A."/>
            <person name="Keuchel H."/>
            <person name="Kirchrath L."/>
            <person name="Kleine K."/>
            <person name="Koetter P."/>
            <person name="Legrain P."/>
            <person name="Liebl S."/>
            <person name="Louis E.J."/>
            <person name="Maia e Silva A."/>
            <person name="Marck C."/>
            <person name="Monnier A.-L."/>
            <person name="Moestl D."/>
            <person name="Mueller S."/>
            <person name="Obermaier B."/>
            <person name="Oliver S.G."/>
            <person name="Pallier C."/>
            <person name="Pascolo S."/>
            <person name="Pfeiffer F."/>
            <person name="Philippsen P."/>
            <person name="Planta R.J."/>
            <person name="Pohl F.M."/>
            <person name="Pohl T.M."/>
            <person name="Poehlmann R."/>
            <person name="Portetelle D."/>
            <person name="Purnelle B."/>
            <person name="Puzos V."/>
            <person name="Ramezani Rad M."/>
            <person name="Rasmussen S.W."/>
            <person name="Remacha M.A."/>
            <person name="Revuelta J.L."/>
            <person name="Richard G.-F."/>
            <person name="Rieger M."/>
            <person name="Rodrigues-Pousada C."/>
            <person name="Rose M."/>
            <person name="Rupp T."/>
            <person name="Santos M.A."/>
            <person name="Schwager C."/>
            <person name="Sensen C."/>
            <person name="Skala J."/>
            <person name="Soares H."/>
            <person name="Sor F."/>
            <person name="Stegemann J."/>
            <person name="Tettelin H."/>
            <person name="Thierry A."/>
            <person name="Tzermia M."/>
            <person name="Urrestarazu L.A."/>
            <person name="van Dyck L."/>
            <person name="van Vliet-Reedijk J.C."/>
            <person name="Valens M."/>
            <person name="Vandenbol M."/>
            <person name="Vilela C."/>
            <person name="Vissers S."/>
            <person name="von Wettstein D."/>
            <person name="Voss H."/>
            <person name="Wiemann S."/>
            <person name="Xu G."/>
            <person name="Zimmermann J."/>
            <person name="Haasemann M."/>
            <person name="Becker I."/>
            <person name="Mewes H.-W."/>
        </authorList>
    </citation>
    <scope>NUCLEOTIDE SEQUENCE [LARGE SCALE GENOMIC DNA]</scope>
    <source>
        <strain>ATCC 204508 / S288c</strain>
    </source>
</reference>
<reference key="3">
    <citation type="journal article" date="2014" name="G3 (Bethesda)">
        <title>The reference genome sequence of Saccharomyces cerevisiae: Then and now.</title>
        <authorList>
            <person name="Engel S.R."/>
            <person name="Dietrich F.S."/>
            <person name="Fisk D.G."/>
            <person name="Binkley G."/>
            <person name="Balakrishnan R."/>
            <person name="Costanzo M.C."/>
            <person name="Dwight S.S."/>
            <person name="Hitz B.C."/>
            <person name="Karra K."/>
            <person name="Nash R.S."/>
            <person name="Weng S."/>
            <person name="Wong E.D."/>
            <person name="Lloyd P."/>
            <person name="Skrzypek M.S."/>
            <person name="Miyasato S.R."/>
            <person name="Simison M."/>
            <person name="Cherry J.M."/>
        </authorList>
    </citation>
    <scope>GENOME REANNOTATION</scope>
    <source>
        <strain>ATCC 204508 / S288c</strain>
    </source>
</reference>
<reference key="4">
    <citation type="journal article" date="2007" name="Genome Res.">
        <title>Approaching a complete repository of sequence-verified protein-encoding clones for Saccharomyces cerevisiae.</title>
        <authorList>
            <person name="Hu Y."/>
            <person name="Rolfs A."/>
            <person name="Bhullar B."/>
            <person name="Murthy T.V.S."/>
            <person name="Zhu C."/>
            <person name="Berger M.F."/>
            <person name="Camargo A.A."/>
            <person name="Kelley F."/>
            <person name="McCarron S."/>
            <person name="Jepson D."/>
            <person name="Richardson A."/>
            <person name="Raphael J."/>
            <person name="Moreira D."/>
            <person name="Taycher E."/>
            <person name="Zuo D."/>
            <person name="Mohr S."/>
            <person name="Kane M.F."/>
            <person name="Williamson J."/>
            <person name="Simpson A.J.G."/>
            <person name="Bulyk M.L."/>
            <person name="Harlow E."/>
            <person name="Marsischky G."/>
            <person name="Kolodner R.D."/>
            <person name="LaBaer J."/>
        </authorList>
    </citation>
    <scope>NUCLEOTIDE SEQUENCE [GENOMIC DNA]</scope>
    <source>
        <strain>ATCC 204508 / S288c</strain>
    </source>
</reference>
<gene>
    <name type="ordered locus">YKR073C</name>
</gene>
<sequence length="106" mass="11974">MIVFDVSLMIIIIFSFAFNMSQSNILMLYNSPHVLVGSDARNFFSCKKWHRCFSGEVILEEKKSQSALGSRSLTCTCPLISAVQLHLERSFFSLAFFAVILLYIPG</sequence>
<accession>P36153</accession>
<accession>A0A1S0T094</accession>